<dbReference type="EC" id="3.1.-.-" evidence="1"/>
<dbReference type="EMBL" id="BA000033">
    <property type="protein sequence ID" value="BAB94761.1"/>
    <property type="molecule type" value="Genomic_DNA"/>
</dbReference>
<dbReference type="RefSeq" id="WP_000600387.1">
    <property type="nucleotide sequence ID" value="NC_003923.1"/>
</dbReference>
<dbReference type="SMR" id="Q7A198"/>
<dbReference type="KEGG" id="sam:MW0896"/>
<dbReference type="HOGENOM" id="CLU_132020_0_0_9"/>
<dbReference type="GO" id="GO:0016788">
    <property type="term" value="F:hydrolase activity, acting on ester bonds"/>
    <property type="evidence" value="ECO:0007669"/>
    <property type="project" value="UniProtKB-UniRule"/>
</dbReference>
<dbReference type="Gene3D" id="3.90.1140.10">
    <property type="entry name" value="Cyclic phosphodiesterase"/>
    <property type="match status" value="1"/>
</dbReference>
<dbReference type="HAMAP" id="MF_01444">
    <property type="entry name" value="2H_phosphoesterase_YjcG"/>
    <property type="match status" value="1"/>
</dbReference>
<dbReference type="InterPro" id="IPR050580">
    <property type="entry name" value="2H_phosphoesterase_YjcG-like"/>
</dbReference>
<dbReference type="InterPro" id="IPR009097">
    <property type="entry name" value="Cyclic_Pdiesterase"/>
</dbReference>
<dbReference type="InterPro" id="IPR022932">
    <property type="entry name" value="YjcG"/>
</dbReference>
<dbReference type="NCBIfam" id="NF010223">
    <property type="entry name" value="PRK13679.1"/>
    <property type="match status" value="1"/>
</dbReference>
<dbReference type="PANTHER" id="PTHR40037:SF1">
    <property type="entry name" value="PHOSPHOESTERASE SAOUHSC_00951-RELATED"/>
    <property type="match status" value="1"/>
</dbReference>
<dbReference type="PANTHER" id="PTHR40037">
    <property type="entry name" value="PHOSPHOESTERASE YJCG-RELATED"/>
    <property type="match status" value="1"/>
</dbReference>
<dbReference type="Pfam" id="PF13563">
    <property type="entry name" value="2_5_RNA_ligase2"/>
    <property type="match status" value="1"/>
</dbReference>
<dbReference type="SUPFAM" id="SSF55144">
    <property type="entry name" value="LigT-like"/>
    <property type="match status" value="1"/>
</dbReference>
<accession>Q7A198</accession>
<keyword id="KW-0378">Hydrolase</keyword>
<proteinExistence type="inferred from homology"/>
<reference key="1">
    <citation type="journal article" date="2002" name="Lancet">
        <title>Genome and virulence determinants of high virulence community-acquired MRSA.</title>
        <authorList>
            <person name="Baba T."/>
            <person name="Takeuchi F."/>
            <person name="Kuroda M."/>
            <person name="Yuzawa H."/>
            <person name="Aoki K."/>
            <person name="Oguchi A."/>
            <person name="Nagai Y."/>
            <person name="Iwama N."/>
            <person name="Asano K."/>
            <person name="Naimi T."/>
            <person name="Kuroda H."/>
            <person name="Cui L."/>
            <person name="Yamamoto K."/>
            <person name="Hiramatsu K."/>
        </authorList>
    </citation>
    <scope>NUCLEOTIDE SEQUENCE [LARGE SCALE GENOMIC DNA]</scope>
    <source>
        <strain>MW2</strain>
    </source>
</reference>
<comment type="similarity">
    <text evidence="1">Belongs to the 2H phosphoesterase superfamily. YjcG family.</text>
</comment>
<gene>
    <name type="ordered locus">MW0896</name>
</gene>
<protein>
    <recommendedName>
        <fullName evidence="1">Putative phosphoesterase MW0896</fullName>
        <ecNumber evidence="1">3.1.-.-</ecNumber>
    </recommendedName>
</protein>
<name>Y896_STAAW</name>
<evidence type="ECO:0000255" key="1">
    <source>
        <dbReference type="HAMAP-Rule" id="MF_01444"/>
    </source>
</evidence>
<feature type="chain" id="PRO_0000299342" description="Putative phosphoesterase MW0896">
    <location>
        <begin position="1"/>
        <end position="169"/>
    </location>
</feature>
<feature type="short sequence motif" description="HXTX 1" evidence="1">
    <location>
        <begin position="34"/>
        <end position="37"/>
    </location>
</feature>
<feature type="short sequence motif" description="HXTX 2" evidence="1">
    <location>
        <begin position="115"/>
        <end position="118"/>
    </location>
</feature>
<feature type="active site" description="Proton donor" evidence="1">
    <location>
        <position position="34"/>
    </location>
</feature>
<feature type="active site" description="Proton acceptor" evidence="1">
    <location>
        <position position="115"/>
    </location>
</feature>
<sequence length="169" mass="19327">MILGLALIPSKSFQEAVDSYRKRYDKQYSRIKPHVTIKAPFEIEDGDLDSVIEQVRARINGIPAVEVHATKASSFKPTNNVIYFKVAKTDDLEELFNRFNGEDFYGEAEHVFVPHFTIAQGLSSQEFEDIFGQVALAGVDHKEIIDELTLLRFDDDEDKWKVIETFKLA</sequence>
<organism>
    <name type="scientific">Staphylococcus aureus (strain MW2)</name>
    <dbReference type="NCBI Taxonomy" id="196620"/>
    <lineage>
        <taxon>Bacteria</taxon>
        <taxon>Bacillati</taxon>
        <taxon>Bacillota</taxon>
        <taxon>Bacilli</taxon>
        <taxon>Bacillales</taxon>
        <taxon>Staphylococcaceae</taxon>
        <taxon>Staphylococcus</taxon>
    </lineage>
</organism>